<dbReference type="EC" id="1.2.1.12"/>
<dbReference type="EMBL" id="X65226">
    <property type="protein sequence ID" value="CAA46334.1"/>
    <property type="molecule type" value="Genomic_DNA"/>
</dbReference>
<dbReference type="EMBL" id="X65226">
    <property type="protein sequence ID" value="CAA46333.1"/>
    <property type="molecule type" value="Genomic_DNA"/>
</dbReference>
<dbReference type="PIR" id="A48445">
    <property type="entry name" value="A48445"/>
</dbReference>
<dbReference type="PDB" id="1A7K">
    <property type="method" value="X-ray"/>
    <property type="resolution" value="2.80 A"/>
    <property type="chains" value="A/B/C/D=2-361"/>
</dbReference>
<dbReference type="PDB" id="1GYP">
    <property type="method" value="X-ray"/>
    <property type="resolution" value="2.80 A"/>
    <property type="chains" value="A/B/C/D=2-359"/>
</dbReference>
<dbReference type="PDB" id="1GYQ">
    <property type="method" value="X-ray"/>
    <property type="resolution" value="3.40 A"/>
    <property type="chains" value="A/B/C/D=2-359"/>
</dbReference>
<dbReference type="PDB" id="1I32">
    <property type="method" value="X-ray"/>
    <property type="resolution" value="2.60 A"/>
    <property type="chains" value="A/B/C/D/E/F=2-361"/>
</dbReference>
<dbReference type="PDB" id="1I33">
    <property type="method" value="X-ray"/>
    <property type="resolution" value="3.00 A"/>
    <property type="chains" value="A/B/C/D/E/F=2-361"/>
</dbReference>
<dbReference type="PDBsum" id="1A7K"/>
<dbReference type="PDBsum" id="1GYP"/>
<dbReference type="PDBsum" id="1GYQ"/>
<dbReference type="PDBsum" id="1I32"/>
<dbReference type="PDBsum" id="1I33"/>
<dbReference type="SMR" id="Q27890"/>
<dbReference type="VEuPathDB" id="TriTrypDB:LmxM.29.2980"/>
<dbReference type="BRENDA" id="1.2.1.12">
    <property type="organism ID" value="2951"/>
</dbReference>
<dbReference type="UniPathway" id="UPA00109">
    <property type="reaction ID" value="UER00184"/>
</dbReference>
<dbReference type="EvolutionaryTrace" id="Q27890"/>
<dbReference type="GO" id="GO:0005829">
    <property type="term" value="C:cytosol"/>
    <property type="evidence" value="ECO:0007669"/>
    <property type="project" value="TreeGrafter"/>
</dbReference>
<dbReference type="GO" id="GO:0020015">
    <property type="term" value="C:glycosome"/>
    <property type="evidence" value="ECO:0007669"/>
    <property type="project" value="UniProtKB-SubCell"/>
</dbReference>
<dbReference type="GO" id="GO:0004365">
    <property type="term" value="F:glyceraldehyde-3-phosphate dehydrogenase (NAD+) (phosphorylating) activity"/>
    <property type="evidence" value="ECO:0007669"/>
    <property type="project" value="UniProtKB-EC"/>
</dbReference>
<dbReference type="GO" id="GO:0051287">
    <property type="term" value="F:NAD binding"/>
    <property type="evidence" value="ECO:0007669"/>
    <property type="project" value="InterPro"/>
</dbReference>
<dbReference type="GO" id="GO:0050661">
    <property type="term" value="F:NADP binding"/>
    <property type="evidence" value="ECO:0007669"/>
    <property type="project" value="InterPro"/>
</dbReference>
<dbReference type="GO" id="GO:0006006">
    <property type="term" value="P:glucose metabolic process"/>
    <property type="evidence" value="ECO:0007669"/>
    <property type="project" value="InterPro"/>
</dbReference>
<dbReference type="GO" id="GO:0006096">
    <property type="term" value="P:glycolytic process"/>
    <property type="evidence" value="ECO:0007669"/>
    <property type="project" value="UniProtKB-UniPathway"/>
</dbReference>
<dbReference type="CDD" id="cd18126">
    <property type="entry name" value="GAPDH_I_C"/>
    <property type="match status" value="1"/>
</dbReference>
<dbReference type="CDD" id="cd05214">
    <property type="entry name" value="GAPDH_I_N"/>
    <property type="match status" value="1"/>
</dbReference>
<dbReference type="FunFam" id="3.30.360.10:FF:000001">
    <property type="entry name" value="Glyceraldehyde-3-phosphate dehydrogenase"/>
    <property type="match status" value="1"/>
</dbReference>
<dbReference type="FunFam" id="3.40.50.720:FF:000001">
    <property type="entry name" value="Glyceraldehyde-3-phosphate dehydrogenase"/>
    <property type="match status" value="1"/>
</dbReference>
<dbReference type="Gene3D" id="3.30.360.10">
    <property type="entry name" value="Dihydrodipicolinate Reductase, domain 2"/>
    <property type="match status" value="1"/>
</dbReference>
<dbReference type="Gene3D" id="3.40.50.720">
    <property type="entry name" value="NAD(P)-binding Rossmann-like Domain"/>
    <property type="match status" value="1"/>
</dbReference>
<dbReference type="InterPro" id="IPR020831">
    <property type="entry name" value="GlycerAld/Erythrose_P_DH"/>
</dbReference>
<dbReference type="InterPro" id="IPR020830">
    <property type="entry name" value="GlycerAld_3-P_DH_AS"/>
</dbReference>
<dbReference type="InterPro" id="IPR020829">
    <property type="entry name" value="GlycerAld_3-P_DH_cat"/>
</dbReference>
<dbReference type="InterPro" id="IPR020828">
    <property type="entry name" value="GlycerAld_3-P_DH_NAD(P)-bd"/>
</dbReference>
<dbReference type="InterPro" id="IPR006424">
    <property type="entry name" value="Glyceraldehyde-3-P_DH_1"/>
</dbReference>
<dbReference type="InterPro" id="IPR036291">
    <property type="entry name" value="NAD(P)-bd_dom_sf"/>
</dbReference>
<dbReference type="NCBIfam" id="TIGR01534">
    <property type="entry name" value="GAPDH-I"/>
    <property type="match status" value="1"/>
</dbReference>
<dbReference type="PANTHER" id="PTHR10836">
    <property type="entry name" value="GLYCERALDEHYDE 3-PHOSPHATE DEHYDROGENASE"/>
    <property type="match status" value="1"/>
</dbReference>
<dbReference type="PANTHER" id="PTHR10836:SF76">
    <property type="entry name" value="GLYCERALDEHYDE-3-PHOSPHATE DEHYDROGENASE-RELATED"/>
    <property type="match status" value="1"/>
</dbReference>
<dbReference type="Pfam" id="PF02800">
    <property type="entry name" value="Gp_dh_C"/>
    <property type="match status" value="1"/>
</dbReference>
<dbReference type="Pfam" id="PF00044">
    <property type="entry name" value="Gp_dh_N"/>
    <property type="match status" value="1"/>
</dbReference>
<dbReference type="PIRSF" id="PIRSF000149">
    <property type="entry name" value="GAP_DH"/>
    <property type="match status" value="1"/>
</dbReference>
<dbReference type="PRINTS" id="PR00078">
    <property type="entry name" value="G3PDHDRGNASE"/>
</dbReference>
<dbReference type="SMART" id="SM00846">
    <property type="entry name" value="Gp_dh_N"/>
    <property type="match status" value="1"/>
</dbReference>
<dbReference type="SUPFAM" id="SSF55347">
    <property type="entry name" value="Glyceraldehyde-3-phosphate dehydrogenase-like, C-terminal domain"/>
    <property type="match status" value="1"/>
</dbReference>
<dbReference type="SUPFAM" id="SSF51735">
    <property type="entry name" value="NAD(P)-binding Rossmann-fold domains"/>
    <property type="match status" value="1"/>
</dbReference>
<dbReference type="PROSITE" id="PS00071">
    <property type="entry name" value="GAPDH"/>
    <property type="match status" value="1"/>
</dbReference>
<protein>
    <recommendedName>
        <fullName>Glyceraldehyde-3-phosphate dehydrogenase, glycosomal</fullName>
        <shortName>GAPDH</shortName>
        <ecNumber>1.2.1.12</ecNumber>
    </recommendedName>
</protein>
<keyword id="KW-0002">3D-structure</keyword>
<keyword id="KW-0324">Glycolysis</keyword>
<keyword id="KW-0327">Glycosome</keyword>
<keyword id="KW-0520">NAD</keyword>
<keyword id="KW-0560">Oxidoreductase</keyword>
<keyword id="KW-0576">Peroxisome</keyword>
<proteinExistence type="evidence at protein level"/>
<gene>
    <name type="primary">GAPG</name>
</gene>
<feature type="initiator methionine" description="Removed">
    <location>
        <position position="1"/>
    </location>
</feature>
<feature type="chain" id="PRO_0000145529" description="Glyceraldehyde-3-phosphate dehydrogenase, glycosomal">
    <location>
        <begin position="2"/>
        <end position="361"/>
    </location>
</feature>
<feature type="short sequence motif" description="Microbody targeting signal" evidence="2">
    <location>
        <begin position="359"/>
        <end position="361"/>
    </location>
</feature>
<feature type="active site" description="Nucleophile">
    <location>
        <position position="167"/>
    </location>
</feature>
<feature type="binding site" evidence="6 7">
    <location>
        <begin position="13"/>
        <end position="14"/>
    </location>
    <ligand>
        <name>NAD(+)</name>
        <dbReference type="ChEBI" id="CHEBI:57540"/>
    </ligand>
</feature>
<feature type="binding site" evidence="6 7">
    <location>
        <position position="39"/>
    </location>
    <ligand>
        <name>NAD(+)</name>
        <dbReference type="ChEBI" id="CHEBI:57540"/>
    </ligand>
</feature>
<feature type="binding site" evidence="6 7">
    <location>
        <position position="92"/>
    </location>
    <ligand>
        <name>NAD(+)</name>
        <dbReference type="ChEBI" id="CHEBI:57540"/>
    </ligand>
</feature>
<feature type="binding site" evidence="6 7">
    <location>
        <position position="135"/>
    </location>
    <ligand>
        <name>NAD(+)</name>
        <dbReference type="ChEBI" id="CHEBI:57540"/>
    </ligand>
</feature>
<feature type="binding site" evidence="1">
    <location>
        <begin position="166"/>
        <end position="168"/>
    </location>
    <ligand>
        <name>D-glyceraldehyde 3-phosphate</name>
        <dbReference type="ChEBI" id="CHEBI:59776"/>
    </ligand>
</feature>
<feature type="binding site" evidence="1">
    <location>
        <position position="198"/>
    </location>
    <ligand>
        <name>D-glyceraldehyde 3-phosphate</name>
        <dbReference type="ChEBI" id="CHEBI:59776"/>
    </ligand>
</feature>
<feature type="binding site" evidence="1">
    <location>
        <begin position="227"/>
        <end position="228"/>
    </location>
    <ligand>
        <name>D-glyceraldehyde 3-phosphate</name>
        <dbReference type="ChEBI" id="CHEBI:59776"/>
    </ligand>
</feature>
<feature type="binding site" evidence="1">
    <location>
        <position position="250"/>
    </location>
    <ligand>
        <name>D-glyceraldehyde 3-phosphate</name>
        <dbReference type="ChEBI" id="CHEBI:59776"/>
    </ligand>
</feature>
<feature type="binding site" evidence="6 7">
    <location>
        <position position="336"/>
    </location>
    <ligand>
        <name>NAD(+)</name>
        <dbReference type="ChEBI" id="CHEBI:57540"/>
    </ligand>
</feature>
<feature type="site" description="Activates thiol group during catalysis">
    <location>
        <position position="195"/>
    </location>
</feature>
<feature type="strand" evidence="10">
    <location>
        <begin position="4"/>
        <end position="9"/>
    </location>
</feature>
<feature type="helix" evidence="10">
    <location>
        <begin position="13"/>
        <end position="24"/>
    </location>
</feature>
<feature type="turn" evidence="10">
    <location>
        <begin position="29"/>
        <end position="31"/>
    </location>
</feature>
<feature type="strand" evidence="10">
    <location>
        <begin position="32"/>
        <end position="40"/>
    </location>
</feature>
<feature type="helix" evidence="10">
    <location>
        <begin position="44"/>
        <end position="52"/>
    </location>
</feature>
<feature type="turn" evidence="10">
    <location>
        <begin position="55"/>
        <end position="57"/>
    </location>
</feature>
<feature type="strand" evidence="10">
    <location>
        <begin position="64"/>
        <end position="67"/>
    </location>
</feature>
<feature type="strand" evidence="9">
    <location>
        <begin position="73"/>
        <end position="75"/>
    </location>
</feature>
<feature type="strand" evidence="10">
    <location>
        <begin position="78"/>
        <end position="81"/>
    </location>
</feature>
<feature type="strand" evidence="10">
    <location>
        <begin position="84"/>
        <end position="90"/>
    </location>
</feature>
<feature type="helix" evidence="10">
    <location>
        <begin position="95"/>
        <end position="97"/>
    </location>
</feature>
<feature type="helix" evidence="10">
    <location>
        <begin position="100"/>
        <end position="103"/>
    </location>
</feature>
<feature type="strand" evidence="10">
    <location>
        <begin position="107"/>
        <end position="110"/>
    </location>
</feature>
<feature type="strand" evidence="10">
    <location>
        <begin position="112"/>
        <end position="114"/>
    </location>
</feature>
<feature type="helix" evidence="10">
    <location>
        <begin position="118"/>
        <end position="121"/>
    </location>
</feature>
<feature type="helix" evidence="10">
    <location>
        <begin position="123"/>
        <end position="126"/>
    </location>
</feature>
<feature type="strand" evidence="10">
    <location>
        <begin position="130"/>
        <end position="136"/>
    </location>
</feature>
<feature type="strand" evidence="10">
    <location>
        <begin position="139"/>
        <end position="141"/>
    </location>
</feature>
<feature type="turn" evidence="10">
    <location>
        <begin position="147"/>
        <end position="149"/>
    </location>
</feature>
<feature type="helix" evidence="10">
    <location>
        <begin position="151"/>
        <end position="153"/>
    </location>
</feature>
<feature type="turn" evidence="10">
    <location>
        <begin position="156"/>
        <end position="158"/>
    </location>
</feature>
<feature type="strand" evidence="10">
    <location>
        <begin position="160"/>
        <end position="163"/>
    </location>
</feature>
<feature type="helix" evidence="10">
    <location>
        <begin position="167"/>
        <end position="181"/>
    </location>
</feature>
<feature type="strand" evidence="10">
    <location>
        <begin position="189"/>
        <end position="196"/>
    </location>
</feature>
<feature type="strand" evidence="10">
    <location>
        <begin position="201"/>
        <end position="205"/>
    </location>
</feature>
<feature type="strand" evidence="9">
    <location>
        <begin position="209"/>
        <end position="212"/>
    </location>
</feature>
<feature type="helix" evidence="10">
    <location>
        <begin position="213"/>
        <end position="215"/>
    </location>
</feature>
<feature type="helix" evidence="10">
    <location>
        <begin position="218"/>
        <end position="220"/>
    </location>
</feature>
<feature type="strand" evidence="10">
    <location>
        <begin position="223"/>
        <end position="226"/>
    </location>
</feature>
<feature type="helix" evidence="10">
    <location>
        <begin position="229"/>
        <end position="236"/>
    </location>
</feature>
<feature type="helix" evidence="10">
    <location>
        <begin position="238"/>
        <end position="240"/>
    </location>
</feature>
<feature type="turn" evidence="10">
    <location>
        <begin position="241"/>
        <end position="243"/>
    </location>
</feature>
<feature type="strand" evidence="10">
    <location>
        <begin position="244"/>
        <end position="252"/>
    </location>
</feature>
<feature type="strand" evidence="10">
    <location>
        <begin position="257"/>
        <end position="264"/>
    </location>
</feature>
<feature type="helix" evidence="10">
    <location>
        <begin position="271"/>
        <end position="283"/>
    </location>
</feature>
<feature type="turn" evidence="10">
    <location>
        <begin position="284"/>
        <end position="289"/>
    </location>
</feature>
<feature type="strand" evidence="10">
    <location>
        <begin position="290"/>
        <end position="293"/>
    </location>
</feature>
<feature type="helix" evidence="10">
    <location>
        <begin position="299"/>
        <end position="302"/>
    </location>
</feature>
<feature type="strand" evidence="10">
    <location>
        <begin position="308"/>
        <end position="312"/>
    </location>
</feature>
<feature type="helix" evidence="10">
    <location>
        <begin position="313"/>
        <end position="318"/>
    </location>
</feature>
<feature type="strand" evidence="10">
    <location>
        <begin position="325"/>
        <end position="334"/>
    </location>
</feature>
<feature type="helix" evidence="10">
    <location>
        <begin position="338"/>
        <end position="357"/>
    </location>
</feature>
<accession>Q27890</accession>
<evidence type="ECO:0000250" key="1"/>
<evidence type="ECO:0000255" key="2"/>
<evidence type="ECO:0000255" key="3">
    <source>
        <dbReference type="PROSITE-ProRule" id="PRU10009"/>
    </source>
</evidence>
<evidence type="ECO:0000269" key="4">
    <source>
    </source>
</evidence>
<evidence type="ECO:0000269" key="5">
    <source>
    </source>
</evidence>
<evidence type="ECO:0000269" key="6">
    <source>
    </source>
</evidence>
<evidence type="ECO:0000269" key="7">
    <source>
    </source>
</evidence>
<evidence type="ECO:0000305" key="8"/>
<evidence type="ECO:0007829" key="9">
    <source>
        <dbReference type="PDB" id="1GYP"/>
    </source>
</evidence>
<evidence type="ECO:0007829" key="10">
    <source>
        <dbReference type="PDB" id="1I32"/>
    </source>
</evidence>
<organism>
    <name type="scientific">Leishmania mexicana</name>
    <dbReference type="NCBI Taxonomy" id="5665"/>
    <lineage>
        <taxon>Eukaryota</taxon>
        <taxon>Discoba</taxon>
        <taxon>Euglenozoa</taxon>
        <taxon>Kinetoplastea</taxon>
        <taxon>Metakinetoplastina</taxon>
        <taxon>Trypanosomatida</taxon>
        <taxon>Trypanosomatidae</taxon>
        <taxon>Leishmaniinae</taxon>
        <taxon>Leishmania</taxon>
    </lineage>
</organism>
<name>G3PG_LEIME</name>
<sequence>MAPIKVGINGFGRIGRMVFQAICDQGLIGTEIDVVAVVDMSTNAEYFAYQMKHDTVHGRPKYTVEAVKSSPSVETADVLVVNGHRIKCVKAQRNPADLPWGKLGVDYVIESTGLFTDKLKAEGHIKGGAKKVVISAPASGGAKTIVMGVNQHEYSPASHHVVSNASCTTNCLAPIVHVLTKENFGIETGLMTTIHSYTATQKTVDGVSLKDWRGGRAAAVNIIPSTTGAAKAVGMVIPSTKGKLTGMSFRVPTPDVSVVDLTFRATRDTSIQEIDKAIKKAAQTYMKGILGFTDEELVSADFINDNRSSVYDSKATLQNNLPGEKRFFKVVSWYDNEWAYSHRVVDLVRYMAAKDAASSKM</sequence>
<comment type="catalytic activity">
    <reaction evidence="3">
        <text>D-glyceraldehyde 3-phosphate + phosphate + NAD(+) = (2R)-3-phospho-glyceroyl phosphate + NADH + H(+)</text>
        <dbReference type="Rhea" id="RHEA:10300"/>
        <dbReference type="ChEBI" id="CHEBI:15378"/>
        <dbReference type="ChEBI" id="CHEBI:43474"/>
        <dbReference type="ChEBI" id="CHEBI:57540"/>
        <dbReference type="ChEBI" id="CHEBI:57604"/>
        <dbReference type="ChEBI" id="CHEBI:57945"/>
        <dbReference type="ChEBI" id="CHEBI:59776"/>
        <dbReference type="EC" id="1.2.1.12"/>
    </reaction>
</comment>
<comment type="pathway">
    <text>Carbohydrate degradation; glycolysis; pyruvate from D-glyceraldehyde 3-phosphate: step 1/5.</text>
</comment>
<comment type="subunit">
    <text evidence="4 5 6 7">Homotetramer.</text>
</comment>
<comment type="subcellular location">
    <subcellularLocation>
        <location>Glycosome</location>
    </subcellularLocation>
</comment>
<comment type="similarity">
    <text evidence="8">Belongs to the glyceraldehyde-3-phosphate dehydrogenase family.</text>
</comment>
<reference key="1">
    <citation type="journal article" date="1992" name="Mol. Biochem. Parasitol.">
        <title>Molecular analysis of the cytosolic and glycosomal glyceraldehyde-3-phosphate dehydrogenase in Leishmania mexicana.</title>
        <authorList>
            <person name="Hannaert V."/>
            <person name="Blaauw M."/>
            <person name="Kohl L."/>
            <person name="Allert S."/>
            <person name="Opperdoes F.R."/>
            <person name="Michels P.A.M."/>
        </authorList>
    </citation>
    <scope>NUCLEOTIDE SEQUENCE [GENOMIC DNA]</scope>
</reference>
<reference key="2">
    <citation type="journal article" date="1995" name="Biochemistry">
        <title>Crystal structure of glycosomal glyceraldehyde-3-phosphate dehydrogenase from Leishmania mexicana: implications for structure-based drug design and a new position for the inorganic phosphate binding site.</title>
        <authorList>
            <person name="Kim H."/>
            <person name="Feil I.K."/>
            <person name="Verlinde C.L.M.J."/>
            <person name="Petra P.H."/>
            <person name="Hol W.G.J."/>
        </authorList>
    </citation>
    <scope>X-RAY CRYSTALLOGRAPHY (2.8 ANGSTROMS) IN COMPLEX WITH NAD AND INORGANIC PHOSPHATE</scope>
    <scope>SUBUNIT</scope>
</reference>
<reference key="3">
    <citation type="journal article" date="1998" name="J. Mol. Biol.">
        <title>Crystal structure of Leishmania mexicana glycosomal glyceraldehyde-3-phosphate dehydrogenase in a new crystal form confirms the putative physiological active site structure.</title>
        <authorList>
            <person name="Kim H."/>
            <person name="Hol W.G.J."/>
        </authorList>
    </citation>
    <scope>X-RAY CRYSTALLOGRAPHY (2.8 ANGSTROMS) IN COMPLEX WITH NAD AND INORGANIC PHOSPHATE</scope>
    <scope>SUBUNIT</scope>
</reference>
<reference key="4">
    <citation type="journal article" date="1999" name="Proc. Natl. Acad. Sci. U.S.A.">
        <title>Structure-based design of submicromolar, biologically active inhibitors of trypanosomatid glyceraldehyde-3-phosphate dehydrogenase.</title>
        <authorList>
            <person name="Aronov A.M."/>
            <person name="Suresh S."/>
            <person name="Buckner F.S."/>
            <person name="van Voorhis W.C."/>
            <person name="Verlinde C.L."/>
            <person name="Opperdoes F.R."/>
            <person name="Hol W.G.J."/>
            <person name="Gelb M.H."/>
        </authorList>
    </citation>
    <scope>X-RAY CRYSTALLOGRAPHY (3.4 ANGSTROMS) IN COMPLEX WITH ADENOSINE ANALOGS</scope>
</reference>
<reference key="5">
    <citation type="journal article" date="2001" name="J. Mol. Biol.">
        <title>Conformational changes in Leishmania mexicana glyceraldehyde-3-phosphate dehydrogenase induced by designed inhibitors.</title>
        <authorList>
            <person name="Suresh S."/>
            <person name="Bressi J.C."/>
            <person name="Kennedy K.J."/>
            <person name="Verlinde C.L.M.J."/>
            <person name="Gelb M.H."/>
            <person name="Hol W.G.J."/>
        </authorList>
    </citation>
    <scope>X-RAY CRYSTALLOGRAPHY (2.6 ANGSTROMS) IN COMPLEX WITH ADENOSINE ANALOGS</scope>
    <scope>SUBUNIT</scope>
</reference>